<feature type="chain" id="PRO_1000067040" description="Glucosamine-6-phosphate deaminase">
    <location>
        <begin position="1"/>
        <end position="266"/>
    </location>
</feature>
<feature type="active site" description="Proton acceptor; for enolization step" evidence="1">
    <location>
        <position position="72"/>
    </location>
</feature>
<feature type="active site" description="For ring-opening step" evidence="1">
    <location>
        <position position="141"/>
    </location>
</feature>
<feature type="active site" description="Proton acceptor; for ring-opening step" evidence="1">
    <location>
        <position position="143"/>
    </location>
</feature>
<feature type="active site" description="For ring-opening step" evidence="1">
    <location>
        <position position="148"/>
    </location>
</feature>
<feature type="site" description="Part of the allosteric site" evidence="1">
    <location>
        <position position="151"/>
    </location>
</feature>
<feature type="site" description="Part of the allosteric site" evidence="1">
    <location>
        <position position="158"/>
    </location>
</feature>
<feature type="site" description="Part of the allosteric site" evidence="1">
    <location>
        <position position="160"/>
    </location>
</feature>
<feature type="site" description="Part of the allosteric site" evidence="1">
    <location>
        <position position="161"/>
    </location>
</feature>
<feature type="site" description="Part of the allosteric site" evidence="1">
    <location>
        <position position="254"/>
    </location>
</feature>
<keyword id="KW-0021">Allosteric enzyme</keyword>
<keyword id="KW-0119">Carbohydrate metabolism</keyword>
<keyword id="KW-0378">Hydrolase</keyword>
<sequence>MRLIPLRNTAEVGKWAARHIVNRINAFKPTAERPFILGLPTGGTPMEAYKYLIAMHKAGEVSFKHVVTFNMDEYVGLPKEHPESYYTFMHTNFFDHVDIPAENINLLNGNAADIDAECRRYEEKIKSYGKIHLFMGGVGVDGHIAFNEPASSLASRTRIKTLTQETRIANSRFFGGDANLVPKYALTVGVGTLLDAEEVMILVTGHGKAQALQAAVEGSINHMWTISCLQLHAKAIMVCDEPSTMELKVKTVKYFRELEAENVKDL</sequence>
<name>NAGB_YERPP</name>
<comment type="function">
    <text evidence="1">Catalyzes the reversible isomerization-deamination of glucosamine 6-phosphate (GlcN6P) to form fructose 6-phosphate (Fru6P) and ammonium ion.</text>
</comment>
<comment type="catalytic activity">
    <reaction evidence="1">
        <text>alpha-D-glucosamine 6-phosphate + H2O = beta-D-fructose 6-phosphate + NH4(+)</text>
        <dbReference type="Rhea" id="RHEA:12172"/>
        <dbReference type="ChEBI" id="CHEBI:15377"/>
        <dbReference type="ChEBI" id="CHEBI:28938"/>
        <dbReference type="ChEBI" id="CHEBI:57634"/>
        <dbReference type="ChEBI" id="CHEBI:75989"/>
        <dbReference type="EC" id="3.5.99.6"/>
    </reaction>
</comment>
<comment type="activity regulation">
    <text evidence="1">Allosterically activated by N-acetylglucosamine 6-phosphate (GlcNAc6P).</text>
</comment>
<comment type="pathway">
    <text evidence="1">Amino-sugar metabolism; N-acetylneuraminate degradation; D-fructose 6-phosphate from N-acetylneuraminate: step 5/5.</text>
</comment>
<comment type="subunit">
    <text evidence="1">Homohexamer.</text>
</comment>
<comment type="similarity">
    <text evidence="1">Belongs to the glucosamine/galactosamine-6-phosphate isomerase family. NagB subfamily.</text>
</comment>
<proteinExistence type="inferred from homology"/>
<evidence type="ECO:0000255" key="1">
    <source>
        <dbReference type="HAMAP-Rule" id="MF_01241"/>
    </source>
</evidence>
<organism>
    <name type="scientific">Yersinia pestis (strain Pestoides F)</name>
    <dbReference type="NCBI Taxonomy" id="386656"/>
    <lineage>
        <taxon>Bacteria</taxon>
        <taxon>Pseudomonadati</taxon>
        <taxon>Pseudomonadota</taxon>
        <taxon>Gammaproteobacteria</taxon>
        <taxon>Enterobacterales</taxon>
        <taxon>Yersiniaceae</taxon>
        <taxon>Yersinia</taxon>
    </lineage>
</organism>
<gene>
    <name evidence="1" type="primary">nagB</name>
    <name type="ordered locus">YPDSF_2626</name>
</gene>
<reference key="1">
    <citation type="submission" date="2007-02" db="EMBL/GenBank/DDBJ databases">
        <title>Complete sequence of chromosome of Yersinia pestis Pestoides F.</title>
        <authorList>
            <consortium name="US DOE Joint Genome Institute"/>
            <person name="Copeland A."/>
            <person name="Lucas S."/>
            <person name="Lapidus A."/>
            <person name="Barry K."/>
            <person name="Detter J.C."/>
            <person name="Glavina del Rio T."/>
            <person name="Hammon N."/>
            <person name="Israni S."/>
            <person name="Dalin E."/>
            <person name="Tice H."/>
            <person name="Pitluck S."/>
            <person name="Di Bartolo G."/>
            <person name="Chain P."/>
            <person name="Malfatti S."/>
            <person name="Shin M."/>
            <person name="Vergez L."/>
            <person name="Schmutz J."/>
            <person name="Larimer F."/>
            <person name="Land M."/>
            <person name="Hauser L."/>
            <person name="Worsham P."/>
            <person name="Chu M."/>
            <person name="Bearden S."/>
            <person name="Garcia E."/>
            <person name="Richardson P."/>
        </authorList>
    </citation>
    <scope>NUCLEOTIDE SEQUENCE [LARGE SCALE GENOMIC DNA]</scope>
    <source>
        <strain>Pestoides F</strain>
    </source>
</reference>
<dbReference type="EC" id="3.5.99.6" evidence="1"/>
<dbReference type="EMBL" id="CP000668">
    <property type="protein sequence ID" value="ABP40992.1"/>
    <property type="molecule type" value="Genomic_DNA"/>
</dbReference>
<dbReference type="RefSeq" id="WP_002210352.1">
    <property type="nucleotide sequence ID" value="NZ_CP009715.1"/>
</dbReference>
<dbReference type="SMR" id="A4TNY0"/>
<dbReference type="GeneID" id="57976064"/>
<dbReference type="KEGG" id="ypp:YPDSF_2626"/>
<dbReference type="PATRIC" id="fig|386656.14.peg.4152"/>
<dbReference type="UniPathway" id="UPA00629">
    <property type="reaction ID" value="UER00684"/>
</dbReference>
<dbReference type="GO" id="GO:0005737">
    <property type="term" value="C:cytoplasm"/>
    <property type="evidence" value="ECO:0007669"/>
    <property type="project" value="TreeGrafter"/>
</dbReference>
<dbReference type="GO" id="GO:0004342">
    <property type="term" value="F:glucosamine-6-phosphate deaminase activity"/>
    <property type="evidence" value="ECO:0007669"/>
    <property type="project" value="UniProtKB-UniRule"/>
</dbReference>
<dbReference type="GO" id="GO:0042802">
    <property type="term" value="F:identical protein binding"/>
    <property type="evidence" value="ECO:0007669"/>
    <property type="project" value="TreeGrafter"/>
</dbReference>
<dbReference type="GO" id="GO:0005975">
    <property type="term" value="P:carbohydrate metabolic process"/>
    <property type="evidence" value="ECO:0007669"/>
    <property type="project" value="InterPro"/>
</dbReference>
<dbReference type="GO" id="GO:0006043">
    <property type="term" value="P:glucosamine catabolic process"/>
    <property type="evidence" value="ECO:0007669"/>
    <property type="project" value="TreeGrafter"/>
</dbReference>
<dbReference type="GO" id="GO:0006046">
    <property type="term" value="P:N-acetylglucosamine catabolic process"/>
    <property type="evidence" value="ECO:0007669"/>
    <property type="project" value="TreeGrafter"/>
</dbReference>
<dbReference type="GO" id="GO:0019262">
    <property type="term" value="P:N-acetylneuraminate catabolic process"/>
    <property type="evidence" value="ECO:0007669"/>
    <property type="project" value="UniProtKB-UniRule"/>
</dbReference>
<dbReference type="CDD" id="cd01399">
    <property type="entry name" value="GlcN6P_deaminase"/>
    <property type="match status" value="1"/>
</dbReference>
<dbReference type="FunFam" id="3.40.50.1360:FF:000002">
    <property type="entry name" value="Glucosamine-6-phosphate deaminase"/>
    <property type="match status" value="1"/>
</dbReference>
<dbReference type="Gene3D" id="3.40.50.1360">
    <property type="match status" value="1"/>
</dbReference>
<dbReference type="HAMAP" id="MF_01241">
    <property type="entry name" value="GlcN6P_deamin"/>
    <property type="match status" value="1"/>
</dbReference>
<dbReference type="InterPro" id="IPR006148">
    <property type="entry name" value="Glc/Gal-6P_isomerase"/>
</dbReference>
<dbReference type="InterPro" id="IPR004547">
    <property type="entry name" value="Glucosamine6P_isomerase"/>
</dbReference>
<dbReference type="InterPro" id="IPR018321">
    <property type="entry name" value="Glucosamine6P_isomerase_CS"/>
</dbReference>
<dbReference type="InterPro" id="IPR037171">
    <property type="entry name" value="NagB/RpiA_transferase-like"/>
</dbReference>
<dbReference type="NCBIfam" id="TIGR00502">
    <property type="entry name" value="nagB"/>
    <property type="match status" value="1"/>
</dbReference>
<dbReference type="NCBIfam" id="NF001685">
    <property type="entry name" value="PRK00443.1-5"/>
    <property type="match status" value="1"/>
</dbReference>
<dbReference type="PANTHER" id="PTHR11280">
    <property type="entry name" value="GLUCOSAMINE-6-PHOSPHATE ISOMERASE"/>
    <property type="match status" value="1"/>
</dbReference>
<dbReference type="PANTHER" id="PTHR11280:SF5">
    <property type="entry name" value="GLUCOSAMINE-6-PHOSPHATE ISOMERASE"/>
    <property type="match status" value="1"/>
</dbReference>
<dbReference type="Pfam" id="PF01182">
    <property type="entry name" value="Glucosamine_iso"/>
    <property type="match status" value="1"/>
</dbReference>
<dbReference type="SUPFAM" id="SSF100950">
    <property type="entry name" value="NagB/RpiA/CoA transferase-like"/>
    <property type="match status" value="1"/>
</dbReference>
<dbReference type="PROSITE" id="PS01161">
    <property type="entry name" value="GLC_GALNAC_ISOMERASE"/>
    <property type="match status" value="1"/>
</dbReference>
<accession>A4TNY0</accession>
<protein>
    <recommendedName>
        <fullName evidence="1">Glucosamine-6-phosphate deaminase</fullName>
        <ecNumber evidence="1">3.5.99.6</ecNumber>
    </recommendedName>
    <alternativeName>
        <fullName evidence="1">GlcN6P deaminase</fullName>
        <shortName evidence="1">GNPDA</shortName>
    </alternativeName>
    <alternativeName>
        <fullName evidence="1">Glucosamine-6-phosphate isomerase</fullName>
    </alternativeName>
</protein>